<sequence length="368" mass="40870">MSESPKKVIVGMSGGVDSSVSAWLLQQQGYQVEGLFMKNWEEDDGEEYCTAAADLADAQAVCDKLGIELHTVNFAAEYWDNVFELFLEEYKAGRTPNPDILCNKEIKFKAFLEFAAEDLGADYIATGHYVRRADVNGKSRLLRGLDGNKDQSYFLYTLGHEQIAQSLFPVGELEKPQVRKIAEDLGLVTAKKKDSTGICFIGERKFRDFLGRYLPAQPGKIITVDGDEIGEHQGLMYHTLGQRKGLGIGGTKDGSEDPWYVVDKDVENNVLIVAQGHEHPRLMSVGLIAQQLHWVDREPFTGTLRCTVKTRYRQTDIPCTINALNDDRIEVIFDEPVAAVTPGQSAVFYSGEVCLGGGIIEQRLPLTV</sequence>
<gene>
    <name evidence="1" type="primary">mnmA</name>
    <name type="synonym">trmU</name>
    <name type="ordered locus">STM1234</name>
</gene>
<proteinExistence type="inferred from homology"/>
<dbReference type="EC" id="2.8.1.13" evidence="1"/>
<dbReference type="EMBL" id="AE006468">
    <property type="protein sequence ID" value="AAL20163.1"/>
    <property type="status" value="ALT_INIT"/>
    <property type="molecule type" value="Genomic_DNA"/>
</dbReference>
<dbReference type="RefSeq" id="NP_460204.3">
    <property type="nucleotide sequence ID" value="NC_003197.2"/>
</dbReference>
<dbReference type="RefSeq" id="WP_014343832.1">
    <property type="nucleotide sequence ID" value="NC_003197.2"/>
</dbReference>
<dbReference type="SMR" id="Q8ZPZ4"/>
<dbReference type="STRING" id="99287.STM1234"/>
<dbReference type="PaxDb" id="99287-STM1234"/>
<dbReference type="GeneID" id="1252752"/>
<dbReference type="KEGG" id="stm:STM1234"/>
<dbReference type="PATRIC" id="fig|99287.12.peg.1305"/>
<dbReference type="HOGENOM" id="CLU_035188_1_0_6"/>
<dbReference type="OMA" id="PFYVWDL"/>
<dbReference type="PhylomeDB" id="Q8ZPZ4"/>
<dbReference type="Proteomes" id="UP000001014">
    <property type="component" value="Chromosome"/>
</dbReference>
<dbReference type="GO" id="GO:0005737">
    <property type="term" value="C:cytoplasm"/>
    <property type="evidence" value="ECO:0007669"/>
    <property type="project" value="UniProtKB-SubCell"/>
</dbReference>
<dbReference type="GO" id="GO:0005524">
    <property type="term" value="F:ATP binding"/>
    <property type="evidence" value="ECO:0007669"/>
    <property type="project" value="UniProtKB-KW"/>
</dbReference>
<dbReference type="GO" id="GO:0000049">
    <property type="term" value="F:tRNA binding"/>
    <property type="evidence" value="ECO:0007669"/>
    <property type="project" value="UniProtKB-KW"/>
</dbReference>
<dbReference type="GO" id="GO:0103016">
    <property type="term" value="F:tRNA-uridine 2-sulfurtransferase activity"/>
    <property type="evidence" value="ECO:0007669"/>
    <property type="project" value="UniProtKB-EC"/>
</dbReference>
<dbReference type="GO" id="GO:0002143">
    <property type="term" value="P:tRNA wobble position uridine thiolation"/>
    <property type="evidence" value="ECO:0000318"/>
    <property type="project" value="GO_Central"/>
</dbReference>
<dbReference type="CDD" id="cd01998">
    <property type="entry name" value="MnmA_TRMU-like"/>
    <property type="match status" value="1"/>
</dbReference>
<dbReference type="FunFam" id="2.30.30.280:FF:000001">
    <property type="entry name" value="tRNA-specific 2-thiouridylase MnmA"/>
    <property type="match status" value="1"/>
</dbReference>
<dbReference type="FunFam" id="2.40.30.10:FF:000023">
    <property type="entry name" value="tRNA-specific 2-thiouridylase MnmA"/>
    <property type="match status" value="1"/>
</dbReference>
<dbReference type="FunFam" id="3.40.50.620:FF:000004">
    <property type="entry name" value="tRNA-specific 2-thiouridylase MnmA"/>
    <property type="match status" value="1"/>
</dbReference>
<dbReference type="Gene3D" id="2.30.30.280">
    <property type="entry name" value="Adenine nucleotide alpha hydrolases-like domains"/>
    <property type="match status" value="1"/>
</dbReference>
<dbReference type="Gene3D" id="3.40.50.620">
    <property type="entry name" value="HUPs"/>
    <property type="match status" value="1"/>
</dbReference>
<dbReference type="Gene3D" id="2.40.30.10">
    <property type="entry name" value="Translation factors"/>
    <property type="match status" value="1"/>
</dbReference>
<dbReference type="HAMAP" id="MF_00144">
    <property type="entry name" value="tRNA_thiouridyl_MnmA"/>
    <property type="match status" value="1"/>
</dbReference>
<dbReference type="InterPro" id="IPR004506">
    <property type="entry name" value="MnmA-like"/>
</dbReference>
<dbReference type="InterPro" id="IPR046885">
    <property type="entry name" value="MnmA-like_C"/>
</dbReference>
<dbReference type="InterPro" id="IPR046884">
    <property type="entry name" value="MnmA-like_central"/>
</dbReference>
<dbReference type="InterPro" id="IPR023382">
    <property type="entry name" value="MnmA-like_central_sf"/>
</dbReference>
<dbReference type="InterPro" id="IPR014729">
    <property type="entry name" value="Rossmann-like_a/b/a_fold"/>
</dbReference>
<dbReference type="NCBIfam" id="NF001138">
    <property type="entry name" value="PRK00143.1"/>
    <property type="match status" value="1"/>
</dbReference>
<dbReference type="NCBIfam" id="TIGR00420">
    <property type="entry name" value="trmU"/>
    <property type="match status" value="1"/>
</dbReference>
<dbReference type="PANTHER" id="PTHR11933:SF5">
    <property type="entry name" value="MITOCHONDRIAL TRNA-SPECIFIC 2-THIOURIDYLASE 1"/>
    <property type="match status" value="1"/>
</dbReference>
<dbReference type="PANTHER" id="PTHR11933">
    <property type="entry name" value="TRNA 5-METHYLAMINOMETHYL-2-THIOURIDYLATE -METHYLTRANSFERASE"/>
    <property type="match status" value="1"/>
</dbReference>
<dbReference type="Pfam" id="PF03054">
    <property type="entry name" value="tRNA_Me_trans"/>
    <property type="match status" value="1"/>
</dbReference>
<dbReference type="Pfam" id="PF20258">
    <property type="entry name" value="tRNA_Me_trans_C"/>
    <property type="match status" value="1"/>
</dbReference>
<dbReference type="Pfam" id="PF20259">
    <property type="entry name" value="tRNA_Me_trans_M"/>
    <property type="match status" value="1"/>
</dbReference>
<dbReference type="SUPFAM" id="SSF52402">
    <property type="entry name" value="Adenine nucleotide alpha hydrolases-like"/>
    <property type="match status" value="1"/>
</dbReference>
<feature type="chain" id="PRO_0000121595" description="tRNA-specific 2-thiouridylase MnmA">
    <location>
        <begin position="1"/>
        <end position="368"/>
    </location>
</feature>
<feature type="region of interest" description="Interaction with target base in tRNA" evidence="1">
    <location>
        <begin position="97"/>
        <end position="99"/>
    </location>
</feature>
<feature type="region of interest" description="Interaction with tRNA" evidence="1">
    <location>
        <begin position="149"/>
        <end position="151"/>
    </location>
</feature>
<feature type="region of interest" description="Interaction with tRNA" evidence="1">
    <location>
        <begin position="311"/>
        <end position="312"/>
    </location>
</feature>
<feature type="active site" description="Nucleophile" evidence="1">
    <location>
        <position position="102"/>
    </location>
</feature>
<feature type="active site" description="Cysteine persulfide intermediate" evidence="1">
    <location>
        <position position="199"/>
    </location>
</feature>
<feature type="binding site" evidence="1">
    <location>
        <begin position="11"/>
        <end position="18"/>
    </location>
    <ligand>
        <name>ATP</name>
        <dbReference type="ChEBI" id="CHEBI:30616"/>
    </ligand>
</feature>
<feature type="binding site" evidence="1">
    <location>
        <position position="37"/>
    </location>
    <ligand>
        <name>ATP</name>
        <dbReference type="ChEBI" id="CHEBI:30616"/>
    </ligand>
</feature>
<feature type="binding site" evidence="1">
    <location>
        <position position="127"/>
    </location>
    <ligand>
        <name>ATP</name>
        <dbReference type="ChEBI" id="CHEBI:30616"/>
    </ligand>
</feature>
<feature type="site" description="Interaction with tRNA" evidence="1">
    <location>
        <position position="128"/>
    </location>
</feature>
<feature type="site" description="Interaction with tRNA" evidence="1">
    <location>
        <position position="344"/>
    </location>
</feature>
<feature type="disulfide bond" description="Alternate" evidence="1">
    <location>
        <begin position="102"/>
        <end position="199"/>
    </location>
</feature>
<comment type="function">
    <text evidence="1">Catalyzes the 2-thiolation of uridine at the wobble position (U34) of tRNA(Lys), tRNA(Glu) and tRNA(Gln), leading to the formation of s(2)U34, the first step of tRNA-mnm(5)s(2)U34 synthesis. Sulfur is provided by IscS, via a sulfur-relay system. Binds ATP and its substrate tRNAs.</text>
</comment>
<comment type="catalytic activity">
    <reaction evidence="1">
        <text>S-sulfanyl-L-cysteinyl-[protein] + uridine(34) in tRNA + AH2 + ATP = 2-thiouridine(34) in tRNA + L-cysteinyl-[protein] + A + AMP + diphosphate + H(+)</text>
        <dbReference type="Rhea" id="RHEA:47032"/>
        <dbReference type="Rhea" id="RHEA-COMP:10131"/>
        <dbReference type="Rhea" id="RHEA-COMP:11726"/>
        <dbReference type="Rhea" id="RHEA-COMP:11727"/>
        <dbReference type="Rhea" id="RHEA-COMP:11728"/>
        <dbReference type="ChEBI" id="CHEBI:13193"/>
        <dbReference type="ChEBI" id="CHEBI:15378"/>
        <dbReference type="ChEBI" id="CHEBI:17499"/>
        <dbReference type="ChEBI" id="CHEBI:29950"/>
        <dbReference type="ChEBI" id="CHEBI:30616"/>
        <dbReference type="ChEBI" id="CHEBI:33019"/>
        <dbReference type="ChEBI" id="CHEBI:61963"/>
        <dbReference type="ChEBI" id="CHEBI:65315"/>
        <dbReference type="ChEBI" id="CHEBI:87170"/>
        <dbReference type="ChEBI" id="CHEBI:456215"/>
        <dbReference type="EC" id="2.8.1.13"/>
    </reaction>
</comment>
<comment type="subunit">
    <text evidence="1">Interacts with TusE.</text>
</comment>
<comment type="subcellular location">
    <subcellularLocation>
        <location evidence="1">Cytoplasm</location>
    </subcellularLocation>
</comment>
<comment type="similarity">
    <text evidence="1">Belongs to the MnmA/TRMU family.</text>
</comment>
<comment type="sequence caution" evidence="2">
    <conflict type="erroneous initiation">
        <sequence resource="EMBL-CDS" id="AAL20163"/>
    </conflict>
</comment>
<organism>
    <name type="scientific">Salmonella typhimurium (strain LT2 / SGSC1412 / ATCC 700720)</name>
    <dbReference type="NCBI Taxonomy" id="99287"/>
    <lineage>
        <taxon>Bacteria</taxon>
        <taxon>Pseudomonadati</taxon>
        <taxon>Pseudomonadota</taxon>
        <taxon>Gammaproteobacteria</taxon>
        <taxon>Enterobacterales</taxon>
        <taxon>Enterobacteriaceae</taxon>
        <taxon>Salmonella</taxon>
    </lineage>
</organism>
<protein>
    <recommendedName>
        <fullName evidence="1">tRNA-specific 2-thiouridylase MnmA</fullName>
        <ecNumber evidence="1">2.8.1.13</ecNumber>
    </recommendedName>
</protein>
<name>MNMA_SALTY</name>
<reference key="1">
    <citation type="journal article" date="2001" name="Nature">
        <title>Complete genome sequence of Salmonella enterica serovar Typhimurium LT2.</title>
        <authorList>
            <person name="McClelland M."/>
            <person name="Sanderson K.E."/>
            <person name="Spieth J."/>
            <person name="Clifton S.W."/>
            <person name="Latreille P."/>
            <person name="Courtney L."/>
            <person name="Porwollik S."/>
            <person name="Ali J."/>
            <person name="Dante M."/>
            <person name="Du F."/>
            <person name="Hou S."/>
            <person name="Layman D."/>
            <person name="Leonard S."/>
            <person name="Nguyen C."/>
            <person name="Scott K."/>
            <person name="Holmes A."/>
            <person name="Grewal N."/>
            <person name="Mulvaney E."/>
            <person name="Ryan E."/>
            <person name="Sun H."/>
            <person name="Florea L."/>
            <person name="Miller W."/>
            <person name="Stoneking T."/>
            <person name="Nhan M."/>
            <person name="Waterston R."/>
            <person name="Wilson R.K."/>
        </authorList>
    </citation>
    <scope>NUCLEOTIDE SEQUENCE [LARGE SCALE GENOMIC DNA]</scope>
    <source>
        <strain>LT2 / SGSC1412 / ATCC 700720</strain>
    </source>
</reference>
<evidence type="ECO:0000255" key="1">
    <source>
        <dbReference type="HAMAP-Rule" id="MF_00144"/>
    </source>
</evidence>
<evidence type="ECO:0000305" key="2"/>
<keyword id="KW-0067">ATP-binding</keyword>
<keyword id="KW-0963">Cytoplasm</keyword>
<keyword id="KW-1015">Disulfide bond</keyword>
<keyword id="KW-0547">Nucleotide-binding</keyword>
<keyword id="KW-1185">Reference proteome</keyword>
<keyword id="KW-0694">RNA-binding</keyword>
<keyword id="KW-0808">Transferase</keyword>
<keyword id="KW-0819">tRNA processing</keyword>
<keyword id="KW-0820">tRNA-binding</keyword>
<accession>Q8ZPZ4</accession>